<sequence length="124" mass="13765">MATVNQLVRKPRARKVAKSNVPALEACPQKRGVCTRVYTTTPKKPNSALRKVCRVRLTNGFEVTSYIGGEGHNLQEHSVILIRGGRVRDLPGVRYHTVRGALDCSGVKDRKQARSKYGVKRPKA</sequence>
<name>RS12_ECOL5</name>
<comment type="function">
    <text evidence="2">With S4 and S5 plays an important role in translational accuracy.</text>
</comment>
<comment type="function">
    <text evidence="2">Interacts with and stabilizes bases of the 16S rRNA that are involved in tRNA selection in the A site and with the mRNA backbone. Located at the interface of the 30S and 50S subunits, it traverses the body of the 30S subunit contacting proteins on the other side and probably holding the rRNA structure together. The combined cluster of proteins S8, S12 and S17 appears to hold together the shoulder and platform of the 30S subunit.</text>
</comment>
<comment type="subunit">
    <text evidence="2">Part of the 30S ribosomal subunit. Contacts proteins S8 and S17. May interact with IF1 in the 30S initiation complex.</text>
</comment>
<comment type="similarity">
    <text evidence="2">Belongs to the universal ribosomal protein uS12 family.</text>
</comment>
<reference key="1">
    <citation type="journal article" date="2006" name="Mol. Microbiol.">
        <title>Role of pathogenicity island-associated integrases in the genome plasticity of uropathogenic Escherichia coli strain 536.</title>
        <authorList>
            <person name="Hochhut B."/>
            <person name="Wilde C."/>
            <person name="Balling G."/>
            <person name="Middendorf B."/>
            <person name="Dobrindt U."/>
            <person name="Brzuszkiewicz E."/>
            <person name="Gottschalk G."/>
            <person name="Carniel E."/>
            <person name="Hacker J."/>
        </authorList>
    </citation>
    <scope>NUCLEOTIDE SEQUENCE [LARGE SCALE GENOMIC DNA]</scope>
    <source>
        <strain>536 / UPEC</strain>
    </source>
</reference>
<proteinExistence type="inferred from homology"/>
<evidence type="ECO:0000250" key="1"/>
<evidence type="ECO:0000255" key="2">
    <source>
        <dbReference type="HAMAP-Rule" id="MF_00403"/>
    </source>
</evidence>
<evidence type="ECO:0000305" key="3"/>
<gene>
    <name evidence="2" type="primary">rpsL</name>
    <name type="ordered locus">ECP_3432</name>
</gene>
<feature type="chain" id="PRO_0000263556" description="Small ribosomal subunit protein uS12">
    <location>
        <begin position="1"/>
        <end position="124"/>
    </location>
</feature>
<feature type="modified residue" description="3-methylthioaspartic acid" evidence="1">
    <location>
        <position position="89"/>
    </location>
</feature>
<feature type="modified residue" description="N6-acetyllysine" evidence="2">
    <location>
        <position position="108"/>
    </location>
</feature>
<organism>
    <name type="scientific">Escherichia coli O6:K15:H31 (strain 536 / UPEC)</name>
    <dbReference type="NCBI Taxonomy" id="362663"/>
    <lineage>
        <taxon>Bacteria</taxon>
        <taxon>Pseudomonadati</taxon>
        <taxon>Pseudomonadota</taxon>
        <taxon>Gammaproteobacteria</taxon>
        <taxon>Enterobacterales</taxon>
        <taxon>Enterobacteriaceae</taxon>
        <taxon>Escherichia</taxon>
    </lineage>
</organism>
<protein>
    <recommendedName>
        <fullName evidence="2">Small ribosomal subunit protein uS12</fullName>
    </recommendedName>
    <alternativeName>
        <fullName evidence="3">30S ribosomal protein S12</fullName>
    </alternativeName>
</protein>
<accession>Q0TCB7</accession>
<dbReference type="EMBL" id="CP000247">
    <property type="protein sequence ID" value="ABG71412.1"/>
    <property type="molecule type" value="Genomic_DNA"/>
</dbReference>
<dbReference type="RefSeq" id="WP_011579218.1">
    <property type="nucleotide sequence ID" value="NC_008253.1"/>
</dbReference>
<dbReference type="SMR" id="Q0TCB7"/>
<dbReference type="KEGG" id="ecp:ECP_3432"/>
<dbReference type="HOGENOM" id="CLU_104295_1_2_6"/>
<dbReference type="Proteomes" id="UP000009182">
    <property type="component" value="Chromosome"/>
</dbReference>
<dbReference type="GO" id="GO:0015935">
    <property type="term" value="C:small ribosomal subunit"/>
    <property type="evidence" value="ECO:0007669"/>
    <property type="project" value="InterPro"/>
</dbReference>
<dbReference type="GO" id="GO:0019843">
    <property type="term" value="F:rRNA binding"/>
    <property type="evidence" value="ECO:0007669"/>
    <property type="project" value="UniProtKB-UniRule"/>
</dbReference>
<dbReference type="GO" id="GO:0003735">
    <property type="term" value="F:structural constituent of ribosome"/>
    <property type="evidence" value="ECO:0007669"/>
    <property type="project" value="InterPro"/>
</dbReference>
<dbReference type="GO" id="GO:0000049">
    <property type="term" value="F:tRNA binding"/>
    <property type="evidence" value="ECO:0007669"/>
    <property type="project" value="UniProtKB-UniRule"/>
</dbReference>
<dbReference type="GO" id="GO:0006412">
    <property type="term" value="P:translation"/>
    <property type="evidence" value="ECO:0007669"/>
    <property type="project" value="UniProtKB-UniRule"/>
</dbReference>
<dbReference type="CDD" id="cd03368">
    <property type="entry name" value="Ribosomal_S12"/>
    <property type="match status" value="1"/>
</dbReference>
<dbReference type="FunFam" id="2.40.50.140:FF:000001">
    <property type="entry name" value="30S ribosomal protein S12"/>
    <property type="match status" value="1"/>
</dbReference>
<dbReference type="Gene3D" id="2.40.50.140">
    <property type="entry name" value="Nucleic acid-binding proteins"/>
    <property type="match status" value="1"/>
</dbReference>
<dbReference type="HAMAP" id="MF_00403_B">
    <property type="entry name" value="Ribosomal_uS12_B"/>
    <property type="match status" value="1"/>
</dbReference>
<dbReference type="InterPro" id="IPR012340">
    <property type="entry name" value="NA-bd_OB-fold"/>
</dbReference>
<dbReference type="InterPro" id="IPR006032">
    <property type="entry name" value="Ribosomal_uS12"/>
</dbReference>
<dbReference type="InterPro" id="IPR005679">
    <property type="entry name" value="Ribosomal_uS12_bac"/>
</dbReference>
<dbReference type="NCBIfam" id="TIGR00981">
    <property type="entry name" value="rpsL_bact"/>
    <property type="match status" value="1"/>
</dbReference>
<dbReference type="PANTHER" id="PTHR11652">
    <property type="entry name" value="30S RIBOSOMAL PROTEIN S12 FAMILY MEMBER"/>
    <property type="match status" value="1"/>
</dbReference>
<dbReference type="Pfam" id="PF00164">
    <property type="entry name" value="Ribosom_S12_S23"/>
    <property type="match status" value="1"/>
</dbReference>
<dbReference type="PIRSF" id="PIRSF002133">
    <property type="entry name" value="Ribosomal_S12/S23"/>
    <property type="match status" value="1"/>
</dbReference>
<dbReference type="PRINTS" id="PR01034">
    <property type="entry name" value="RIBOSOMALS12"/>
</dbReference>
<dbReference type="SUPFAM" id="SSF50249">
    <property type="entry name" value="Nucleic acid-binding proteins"/>
    <property type="match status" value="1"/>
</dbReference>
<dbReference type="PROSITE" id="PS00055">
    <property type="entry name" value="RIBOSOMAL_S12"/>
    <property type="match status" value="1"/>
</dbReference>
<keyword id="KW-0007">Acetylation</keyword>
<keyword id="KW-0488">Methylation</keyword>
<keyword id="KW-0687">Ribonucleoprotein</keyword>
<keyword id="KW-0689">Ribosomal protein</keyword>
<keyword id="KW-0694">RNA-binding</keyword>
<keyword id="KW-0699">rRNA-binding</keyword>
<keyword id="KW-0820">tRNA-binding</keyword>